<evidence type="ECO:0000255" key="1">
    <source>
        <dbReference type="HAMAP-Rule" id="MF_00182"/>
    </source>
</evidence>
<sequence length="314" mass="34544">MRVIYMGTPEFAVAPLHSLIGNQYDVVAVFTQPDRPKGRGKKLQSTPVKELALAHGLMLYQPIKLRESSVVEIIKSLEPDVIVVVAYGQILSKEILEIPTYGCINVHASLLPKYRGAAPIHRAIIDGEKKTGVTTMYMDVGLDTGDMLLKKEVLIGADETAGELRDRLMALGADTLIKTLNQVQRGTLVGEKQNDLESSYAAMLDKGLGQINWNQSAEAIRNLIRGTIPWPMAYTTYLGNRVKIWKSRIEESEVSGKPGEILKVEKSGIFVKTGQGTLVIERIQFSGKKPLDVREYLAGNTIEKGVLLGEEDGN</sequence>
<feature type="chain" id="PRO_1000058394" description="Methionyl-tRNA formyltransferase">
    <location>
        <begin position="1"/>
        <end position="314"/>
    </location>
</feature>
<feature type="binding site" evidence="1">
    <location>
        <begin position="109"/>
        <end position="112"/>
    </location>
    <ligand>
        <name>(6S)-5,6,7,8-tetrahydrofolate</name>
        <dbReference type="ChEBI" id="CHEBI:57453"/>
    </ligand>
</feature>
<proteinExistence type="inferred from homology"/>
<comment type="function">
    <text evidence="1">Attaches a formyl group to the free amino group of methionyl-tRNA(fMet). The formyl group appears to play a dual role in the initiator identity of N-formylmethionyl-tRNA by promoting its recognition by IF2 and preventing the misappropriation of this tRNA by the elongation apparatus.</text>
</comment>
<comment type="catalytic activity">
    <reaction evidence="1">
        <text>L-methionyl-tRNA(fMet) + (6R)-10-formyltetrahydrofolate = N-formyl-L-methionyl-tRNA(fMet) + (6S)-5,6,7,8-tetrahydrofolate + H(+)</text>
        <dbReference type="Rhea" id="RHEA:24380"/>
        <dbReference type="Rhea" id="RHEA-COMP:9952"/>
        <dbReference type="Rhea" id="RHEA-COMP:9953"/>
        <dbReference type="ChEBI" id="CHEBI:15378"/>
        <dbReference type="ChEBI" id="CHEBI:57453"/>
        <dbReference type="ChEBI" id="CHEBI:78530"/>
        <dbReference type="ChEBI" id="CHEBI:78844"/>
        <dbReference type="ChEBI" id="CHEBI:195366"/>
        <dbReference type="EC" id="2.1.2.9"/>
    </reaction>
</comment>
<comment type="similarity">
    <text evidence="1">Belongs to the Fmt family.</text>
</comment>
<accession>A6TRW7</accession>
<protein>
    <recommendedName>
        <fullName evidence="1">Methionyl-tRNA formyltransferase</fullName>
        <ecNumber evidence="1">2.1.2.9</ecNumber>
    </recommendedName>
</protein>
<reference key="1">
    <citation type="journal article" date="2016" name="Genome Announc.">
        <title>Complete genome sequence of Alkaliphilus metalliredigens strain QYMF, an alkaliphilic and metal-reducing bacterium isolated from borax-contaminated leachate ponds.</title>
        <authorList>
            <person name="Hwang C."/>
            <person name="Copeland A."/>
            <person name="Lucas S."/>
            <person name="Lapidus A."/>
            <person name="Barry K."/>
            <person name="Detter J.C."/>
            <person name="Glavina Del Rio T."/>
            <person name="Hammon N."/>
            <person name="Israni S."/>
            <person name="Dalin E."/>
            <person name="Tice H."/>
            <person name="Pitluck S."/>
            <person name="Chertkov O."/>
            <person name="Brettin T."/>
            <person name="Bruce D."/>
            <person name="Han C."/>
            <person name="Schmutz J."/>
            <person name="Larimer F."/>
            <person name="Land M.L."/>
            <person name="Hauser L."/>
            <person name="Kyrpides N."/>
            <person name="Mikhailova N."/>
            <person name="Ye Q."/>
            <person name="Zhou J."/>
            <person name="Richardson P."/>
            <person name="Fields M.W."/>
        </authorList>
    </citation>
    <scope>NUCLEOTIDE SEQUENCE [LARGE SCALE GENOMIC DNA]</scope>
    <source>
        <strain>QYMF</strain>
    </source>
</reference>
<name>FMT_ALKMQ</name>
<keyword id="KW-0648">Protein biosynthesis</keyword>
<keyword id="KW-1185">Reference proteome</keyword>
<keyword id="KW-0808">Transferase</keyword>
<gene>
    <name evidence="1" type="primary">fmt</name>
    <name type="ordered locus">Amet_2785</name>
</gene>
<organism>
    <name type="scientific">Alkaliphilus metalliredigens (strain QYMF)</name>
    <dbReference type="NCBI Taxonomy" id="293826"/>
    <lineage>
        <taxon>Bacteria</taxon>
        <taxon>Bacillati</taxon>
        <taxon>Bacillota</taxon>
        <taxon>Clostridia</taxon>
        <taxon>Peptostreptococcales</taxon>
        <taxon>Natronincolaceae</taxon>
        <taxon>Alkaliphilus</taxon>
    </lineage>
</organism>
<dbReference type="EC" id="2.1.2.9" evidence="1"/>
<dbReference type="EMBL" id="CP000724">
    <property type="protein sequence ID" value="ABR48935.1"/>
    <property type="molecule type" value="Genomic_DNA"/>
</dbReference>
<dbReference type="RefSeq" id="WP_012063906.1">
    <property type="nucleotide sequence ID" value="NC_009633.1"/>
</dbReference>
<dbReference type="SMR" id="A6TRW7"/>
<dbReference type="STRING" id="293826.Amet_2785"/>
<dbReference type="KEGG" id="amt:Amet_2785"/>
<dbReference type="eggNOG" id="COG0223">
    <property type="taxonomic scope" value="Bacteria"/>
</dbReference>
<dbReference type="HOGENOM" id="CLU_033347_1_1_9"/>
<dbReference type="OrthoDB" id="9802815at2"/>
<dbReference type="Proteomes" id="UP000001572">
    <property type="component" value="Chromosome"/>
</dbReference>
<dbReference type="GO" id="GO:0005829">
    <property type="term" value="C:cytosol"/>
    <property type="evidence" value="ECO:0007669"/>
    <property type="project" value="TreeGrafter"/>
</dbReference>
<dbReference type="GO" id="GO:0004479">
    <property type="term" value="F:methionyl-tRNA formyltransferase activity"/>
    <property type="evidence" value="ECO:0007669"/>
    <property type="project" value="UniProtKB-UniRule"/>
</dbReference>
<dbReference type="CDD" id="cd08646">
    <property type="entry name" value="FMT_core_Met-tRNA-FMT_N"/>
    <property type="match status" value="1"/>
</dbReference>
<dbReference type="CDD" id="cd08704">
    <property type="entry name" value="Met_tRNA_FMT_C"/>
    <property type="match status" value="1"/>
</dbReference>
<dbReference type="FunFam" id="3.40.50.12230:FF:000001">
    <property type="entry name" value="Methionyl-tRNA formyltransferase"/>
    <property type="match status" value="1"/>
</dbReference>
<dbReference type="Gene3D" id="3.10.25.10">
    <property type="entry name" value="Formyl transferase, C-terminal domain"/>
    <property type="match status" value="1"/>
</dbReference>
<dbReference type="Gene3D" id="3.40.50.170">
    <property type="entry name" value="Formyl transferase, N-terminal domain"/>
    <property type="match status" value="1"/>
</dbReference>
<dbReference type="HAMAP" id="MF_00182">
    <property type="entry name" value="Formyl_trans"/>
    <property type="match status" value="1"/>
</dbReference>
<dbReference type="InterPro" id="IPR005794">
    <property type="entry name" value="Fmt"/>
</dbReference>
<dbReference type="InterPro" id="IPR005793">
    <property type="entry name" value="Formyl_trans_C"/>
</dbReference>
<dbReference type="InterPro" id="IPR037022">
    <property type="entry name" value="Formyl_trans_C_sf"/>
</dbReference>
<dbReference type="InterPro" id="IPR002376">
    <property type="entry name" value="Formyl_transf_N"/>
</dbReference>
<dbReference type="InterPro" id="IPR036477">
    <property type="entry name" value="Formyl_transf_N_sf"/>
</dbReference>
<dbReference type="InterPro" id="IPR011034">
    <property type="entry name" value="Formyl_transferase-like_C_sf"/>
</dbReference>
<dbReference type="InterPro" id="IPR001555">
    <property type="entry name" value="GART_AS"/>
</dbReference>
<dbReference type="InterPro" id="IPR044135">
    <property type="entry name" value="Met-tRNA-FMT_C"/>
</dbReference>
<dbReference type="InterPro" id="IPR041711">
    <property type="entry name" value="Met-tRNA-FMT_N"/>
</dbReference>
<dbReference type="NCBIfam" id="TIGR00460">
    <property type="entry name" value="fmt"/>
    <property type="match status" value="1"/>
</dbReference>
<dbReference type="PANTHER" id="PTHR11138">
    <property type="entry name" value="METHIONYL-TRNA FORMYLTRANSFERASE"/>
    <property type="match status" value="1"/>
</dbReference>
<dbReference type="PANTHER" id="PTHR11138:SF5">
    <property type="entry name" value="METHIONYL-TRNA FORMYLTRANSFERASE, MITOCHONDRIAL"/>
    <property type="match status" value="1"/>
</dbReference>
<dbReference type="Pfam" id="PF02911">
    <property type="entry name" value="Formyl_trans_C"/>
    <property type="match status" value="1"/>
</dbReference>
<dbReference type="Pfam" id="PF00551">
    <property type="entry name" value="Formyl_trans_N"/>
    <property type="match status" value="1"/>
</dbReference>
<dbReference type="SUPFAM" id="SSF50486">
    <property type="entry name" value="FMT C-terminal domain-like"/>
    <property type="match status" value="1"/>
</dbReference>
<dbReference type="SUPFAM" id="SSF53328">
    <property type="entry name" value="Formyltransferase"/>
    <property type="match status" value="1"/>
</dbReference>
<dbReference type="PROSITE" id="PS00373">
    <property type="entry name" value="GART"/>
    <property type="match status" value="1"/>
</dbReference>